<comment type="function">
    <text evidence="1">F(1)F(0) ATP synthase produces ATP from ADP in the presence of a proton or sodium gradient. F-type ATPases consist of two structural domains, F(1) containing the extramembraneous catalytic core and F(0) containing the membrane proton channel, linked together by a central stalk and a peripheral stalk. During catalysis, ATP synthesis in the catalytic domain of F(1) is coupled via a rotary mechanism of the central stalk subunits to proton translocation.</text>
</comment>
<comment type="function">
    <text evidence="1">Component of the F(0) channel, it forms part of the peripheral stalk, linking F(1) to F(0).</text>
</comment>
<comment type="subunit">
    <text evidence="1">F-type ATPases have 2 components, F(1) - the catalytic core - and F(0) - the membrane proton channel. F(1) has five subunits: alpha(3), beta(3), gamma(1), delta(1), epsilon(1). F(0) has four main subunits: a(1), b(1), b'(1) and c(10-14). The alpha and beta chains form an alternating ring which encloses part of the gamma chain. F(1) is attached to F(0) by a central stalk formed by the gamma and epsilon chains, while a peripheral stalk is formed by the delta, b and b' chains.</text>
</comment>
<comment type="subcellular location">
    <subcellularLocation>
        <location evidence="1">Plastid</location>
        <location evidence="1">Chloroplast thylakoid membrane</location>
        <topology evidence="1">Single-pass membrane protein</topology>
    </subcellularLocation>
</comment>
<comment type="miscellaneous">
    <text>In plastids the F-type ATPase is also known as CF(1)CF(0).</text>
</comment>
<comment type="similarity">
    <text evidence="1">Belongs to the ATPase B chain family.</text>
</comment>
<gene>
    <name evidence="1" type="primary">atpF</name>
</gene>
<evidence type="ECO:0000255" key="1">
    <source>
        <dbReference type="HAMAP-Rule" id="MF_01398"/>
    </source>
</evidence>
<reference key="1">
    <citation type="journal article" date="2007" name="Mol. Genet. Genomics">
        <title>Chloroplast genomes of the diatoms Phaeodactylum tricornutum and Thalassiosira pseudonana: comparison with other plastid genomes of the red lineage.</title>
        <authorList>
            <person name="Oudot-Le Secq M.-P."/>
            <person name="Grimwood J."/>
            <person name="Shapiro H."/>
            <person name="Armbrust E.V."/>
            <person name="Bowler C."/>
            <person name="Green B.R."/>
        </authorList>
    </citation>
    <scope>NUCLEOTIDE SEQUENCE [LARGE SCALE GENOMIC DNA]</scope>
    <source>
        <strain>CCMP1335 / NEPCC58 / CCAP 1085/12</strain>
    </source>
</reference>
<geneLocation type="chloroplast"/>
<organism>
    <name type="scientific">Thalassiosira pseudonana</name>
    <name type="common">Marine diatom</name>
    <name type="synonym">Cyclotella nana</name>
    <dbReference type="NCBI Taxonomy" id="35128"/>
    <lineage>
        <taxon>Eukaryota</taxon>
        <taxon>Sar</taxon>
        <taxon>Stramenopiles</taxon>
        <taxon>Ochrophyta</taxon>
        <taxon>Bacillariophyta</taxon>
        <taxon>Coscinodiscophyceae</taxon>
        <taxon>Thalassiosirophycidae</taxon>
        <taxon>Thalassiosirales</taxon>
        <taxon>Thalassiosiraceae</taxon>
        <taxon>Thalassiosira</taxon>
    </lineage>
</organism>
<accession>A0T0P2</accession>
<keyword id="KW-0066">ATP synthesis</keyword>
<keyword id="KW-0138">CF(0)</keyword>
<keyword id="KW-0150">Chloroplast</keyword>
<keyword id="KW-0375">Hydrogen ion transport</keyword>
<keyword id="KW-0406">Ion transport</keyword>
<keyword id="KW-0472">Membrane</keyword>
<keyword id="KW-0934">Plastid</keyword>
<keyword id="KW-0793">Thylakoid</keyword>
<keyword id="KW-0812">Transmembrane</keyword>
<keyword id="KW-1133">Transmembrane helix</keyword>
<keyword id="KW-0813">Transport</keyword>
<sequence>MENFNQIFTVLAASEGIGLNLDILETGLLNILALVAILVYTGKDFLGSILQERKSTIVKSVQDAEDRLNEANRRLSEAQKQLSQAHVVISEIRNETKTAKTNLLKSDATTAKKELTTRFNRAISSFRSKERVIFLDVKQQIISLVLKRSAIQAKETFGSKKRARALINETIQKLEGDLL</sequence>
<protein>
    <recommendedName>
        <fullName evidence="1">ATP synthase subunit b, chloroplastic</fullName>
    </recommendedName>
    <alternativeName>
        <fullName evidence="1">ATP synthase F(0) sector subunit b</fullName>
    </alternativeName>
    <alternativeName>
        <fullName evidence="1">ATPase subunit I</fullName>
    </alternativeName>
</protein>
<name>ATPF_THAPS</name>
<proteinExistence type="inferred from homology"/>
<feature type="chain" id="PRO_0000368994" description="ATP synthase subunit b, chloroplastic">
    <location>
        <begin position="1"/>
        <end position="179"/>
    </location>
</feature>
<feature type="transmembrane region" description="Helical" evidence="1">
    <location>
        <begin position="28"/>
        <end position="46"/>
    </location>
</feature>
<dbReference type="EMBL" id="EF067921">
    <property type="protein sequence ID" value="ABK20727.1"/>
    <property type="molecule type" value="Genomic_DNA"/>
</dbReference>
<dbReference type="RefSeq" id="YP_874504.1">
    <property type="nucleotide sequence ID" value="NC_008589.1"/>
</dbReference>
<dbReference type="SMR" id="A0T0P2"/>
<dbReference type="STRING" id="35128.A0T0P2"/>
<dbReference type="PaxDb" id="35128-Thapsdraft1318"/>
<dbReference type="GeneID" id="4524799"/>
<dbReference type="eggNOG" id="ENOG502SBID">
    <property type="taxonomic scope" value="Eukaryota"/>
</dbReference>
<dbReference type="InParanoid" id="A0T0P2"/>
<dbReference type="OMA" id="IRANIGM"/>
<dbReference type="GO" id="GO:0009535">
    <property type="term" value="C:chloroplast thylakoid membrane"/>
    <property type="evidence" value="ECO:0007669"/>
    <property type="project" value="UniProtKB-SubCell"/>
</dbReference>
<dbReference type="GO" id="GO:0045259">
    <property type="term" value="C:proton-transporting ATP synthase complex"/>
    <property type="evidence" value="ECO:0007669"/>
    <property type="project" value="UniProtKB-KW"/>
</dbReference>
<dbReference type="GO" id="GO:0046933">
    <property type="term" value="F:proton-transporting ATP synthase activity, rotational mechanism"/>
    <property type="evidence" value="ECO:0007669"/>
    <property type="project" value="UniProtKB-UniRule"/>
</dbReference>
<dbReference type="CDD" id="cd06503">
    <property type="entry name" value="ATP-synt_Fo_b"/>
    <property type="match status" value="1"/>
</dbReference>
<dbReference type="HAMAP" id="MF_01398">
    <property type="entry name" value="ATP_synth_b_bprime"/>
    <property type="match status" value="1"/>
</dbReference>
<dbReference type="InterPro" id="IPR002146">
    <property type="entry name" value="ATP_synth_b/b'su_bac/chlpt"/>
</dbReference>
<dbReference type="PANTHER" id="PTHR34264">
    <property type="entry name" value="ATP SYNTHASE SUBUNIT B, CHLOROPLASTIC"/>
    <property type="match status" value="1"/>
</dbReference>
<dbReference type="PANTHER" id="PTHR34264:SF3">
    <property type="entry name" value="ATP SYNTHASE SUBUNIT B, CHLOROPLASTIC"/>
    <property type="match status" value="1"/>
</dbReference>
<dbReference type="Pfam" id="PF00430">
    <property type="entry name" value="ATP-synt_B"/>
    <property type="match status" value="1"/>
</dbReference>